<gene>
    <name type="primary">spoIIIAF</name>
    <name type="ordered locus">BSU24380</name>
</gene>
<accession>P49783</accession>
<organism>
    <name type="scientific">Bacillus subtilis (strain 168)</name>
    <dbReference type="NCBI Taxonomy" id="224308"/>
    <lineage>
        <taxon>Bacteria</taxon>
        <taxon>Bacillati</taxon>
        <taxon>Bacillota</taxon>
        <taxon>Bacilli</taxon>
        <taxon>Bacillales</taxon>
        <taxon>Bacillaceae</taxon>
        <taxon>Bacillus</taxon>
    </lineage>
</organism>
<sequence>MSFLTEWLTTIVLFILFAIVIDMLLPSSSMQKYAKMVVSLLLIVVMLTPIFKLFKTDPEVIFEYLTKNGQSESADIKNQINSKKIEIQASQRAYILEEMAVQLKKKAEERFSHDEYKVGRIKLTAGEKVDSEEDIKTISVYMAPSSEKTVQTVAPVHIDTDHAYVTKEAAEQKEAKQIQTQLADIWEIGSEKITVHMEGGESVGNE</sequence>
<feature type="chain" id="PRO_0000072070" description="Stage III sporulation protein AF">
    <location>
        <begin position="1"/>
        <end position="206"/>
    </location>
</feature>
<feature type="transmembrane region" description="Helical" evidence="1">
    <location>
        <begin position="1"/>
        <end position="21"/>
    </location>
</feature>
<feature type="transmembrane region" description="Helical" evidence="1">
    <location>
        <begin position="34"/>
        <end position="54"/>
    </location>
</feature>
<feature type="strand" evidence="3">
    <location>
        <begin position="85"/>
        <end position="88"/>
    </location>
</feature>
<feature type="helix" evidence="3">
    <location>
        <begin position="91"/>
        <end position="110"/>
    </location>
</feature>
<feature type="strand" evidence="3">
    <location>
        <begin position="112"/>
        <end position="115"/>
    </location>
</feature>
<feature type="strand" evidence="3">
    <location>
        <begin position="117"/>
        <end position="125"/>
    </location>
</feature>
<feature type="helix" evidence="3">
    <location>
        <begin position="132"/>
        <end position="134"/>
    </location>
</feature>
<feature type="strand" evidence="3">
    <location>
        <begin position="135"/>
        <end position="143"/>
    </location>
</feature>
<feature type="helix" evidence="3">
    <location>
        <begin position="161"/>
        <end position="186"/>
    </location>
</feature>
<feature type="helix" evidence="3">
    <location>
        <begin position="190"/>
        <end position="192"/>
    </location>
</feature>
<feature type="strand" evidence="3">
    <location>
        <begin position="193"/>
        <end position="196"/>
    </location>
</feature>
<feature type="strand" evidence="3">
    <location>
        <begin position="198"/>
        <end position="201"/>
    </location>
</feature>
<evidence type="ECO:0000255" key="1"/>
<evidence type="ECO:0000305" key="2"/>
<evidence type="ECO:0007829" key="3">
    <source>
        <dbReference type="PDB" id="6DCS"/>
    </source>
</evidence>
<proteinExistence type="evidence at protein level"/>
<name>SP3AF_BACSU</name>
<reference key="1">
    <citation type="submission" date="1995-09" db="EMBL/GenBank/DDBJ databases">
        <authorList>
            <person name="Guerout-Fleury A.M."/>
            <person name="Gonzy-Treboul G."/>
            <person name="Stragier P."/>
        </authorList>
    </citation>
    <scope>NUCLEOTIDE SEQUENCE [GENOMIC DNA]</scope>
    <source>
        <strain>168 / JH642</strain>
    </source>
</reference>
<reference key="2">
    <citation type="journal article" date="1996" name="Microbiology">
        <title>Systematic sequencing of the 283 kb 210 degrees-232 degrees region of the Bacillus subtilis genome containing the skin element and many sporulation genes.</title>
        <authorList>
            <person name="Mizuno M."/>
            <person name="Masuda S."/>
            <person name="Takemaru K."/>
            <person name="Hosono S."/>
            <person name="Sato T."/>
            <person name="Takeuchi M."/>
            <person name="Kobayashi Y."/>
        </authorList>
    </citation>
    <scope>NUCLEOTIDE SEQUENCE [GENOMIC DNA]</scope>
    <source>
        <strain>168 / JH642</strain>
    </source>
</reference>
<reference key="3">
    <citation type="journal article" date="1997" name="Nature">
        <title>The complete genome sequence of the Gram-positive bacterium Bacillus subtilis.</title>
        <authorList>
            <person name="Kunst F."/>
            <person name="Ogasawara N."/>
            <person name="Moszer I."/>
            <person name="Albertini A.M."/>
            <person name="Alloni G."/>
            <person name="Azevedo V."/>
            <person name="Bertero M.G."/>
            <person name="Bessieres P."/>
            <person name="Bolotin A."/>
            <person name="Borchert S."/>
            <person name="Borriss R."/>
            <person name="Boursier L."/>
            <person name="Brans A."/>
            <person name="Braun M."/>
            <person name="Brignell S.C."/>
            <person name="Bron S."/>
            <person name="Brouillet S."/>
            <person name="Bruschi C.V."/>
            <person name="Caldwell B."/>
            <person name="Capuano V."/>
            <person name="Carter N.M."/>
            <person name="Choi S.-K."/>
            <person name="Codani J.-J."/>
            <person name="Connerton I.F."/>
            <person name="Cummings N.J."/>
            <person name="Daniel R.A."/>
            <person name="Denizot F."/>
            <person name="Devine K.M."/>
            <person name="Duesterhoeft A."/>
            <person name="Ehrlich S.D."/>
            <person name="Emmerson P.T."/>
            <person name="Entian K.-D."/>
            <person name="Errington J."/>
            <person name="Fabret C."/>
            <person name="Ferrari E."/>
            <person name="Foulger D."/>
            <person name="Fritz C."/>
            <person name="Fujita M."/>
            <person name="Fujita Y."/>
            <person name="Fuma S."/>
            <person name="Galizzi A."/>
            <person name="Galleron N."/>
            <person name="Ghim S.-Y."/>
            <person name="Glaser P."/>
            <person name="Goffeau A."/>
            <person name="Golightly E.J."/>
            <person name="Grandi G."/>
            <person name="Guiseppi G."/>
            <person name="Guy B.J."/>
            <person name="Haga K."/>
            <person name="Haiech J."/>
            <person name="Harwood C.R."/>
            <person name="Henaut A."/>
            <person name="Hilbert H."/>
            <person name="Holsappel S."/>
            <person name="Hosono S."/>
            <person name="Hullo M.-F."/>
            <person name="Itaya M."/>
            <person name="Jones L.-M."/>
            <person name="Joris B."/>
            <person name="Karamata D."/>
            <person name="Kasahara Y."/>
            <person name="Klaerr-Blanchard M."/>
            <person name="Klein C."/>
            <person name="Kobayashi Y."/>
            <person name="Koetter P."/>
            <person name="Koningstein G."/>
            <person name="Krogh S."/>
            <person name="Kumano M."/>
            <person name="Kurita K."/>
            <person name="Lapidus A."/>
            <person name="Lardinois S."/>
            <person name="Lauber J."/>
            <person name="Lazarevic V."/>
            <person name="Lee S.-M."/>
            <person name="Levine A."/>
            <person name="Liu H."/>
            <person name="Masuda S."/>
            <person name="Mauel C."/>
            <person name="Medigue C."/>
            <person name="Medina N."/>
            <person name="Mellado R.P."/>
            <person name="Mizuno M."/>
            <person name="Moestl D."/>
            <person name="Nakai S."/>
            <person name="Noback M."/>
            <person name="Noone D."/>
            <person name="O'Reilly M."/>
            <person name="Ogawa K."/>
            <person name="Ogiwara A."/>
            <person name="Oudega B."/>
            <person name="Park S.-H."/>
            <person name="Parro V."/>
            <person name="Pohl T.M."/>
            <person name="Portetelle D."/>
            <person name="Porwollik S."/>
            <person name="Prescott A.M."/>
            <person name="Presecan E."/>
            <person name="Pujic P."/>
            <person name="Purnelle B."/>
            <person name="Rapoport G."/>
            <person name="Rey M."/>
            <person name="Reynolds S."/>
            <person name="Rieger M."/>
            <person name="Rivolta C."/>
            <person name="Rocha E."/>
            <person name="Roche B."/>
            <person name="Rose M."/>
            <person name="Sadaie Y."/>
            <person name="Sato T."/>
            <person name="Scanlan E."/>
            <person name="Schleich S."/>
            <person name="Schroeter R."/>
            <person name="Scoffone F."/>
            <person name="Sekiguchi J."/>
            <person name="Sekowska A."/>
            <person name="Seror S.J."/>
            <person name="Serror P."/>
            <person name="Shin B.-S."/>
            <person name="Soldo B."/>
            <person name="Sorokin A."/>
            <person name="Tacconi E."/>
            <person name="Takagi T."/>
            <person name="Takahashi H."/>
            <person name="Takemaru K."/>
            <person name="Takeuchi M."/>
            <person name="Tamakoshi A."/>
            <person name="Tanaka T."/>
            <person name="Terpstra P."/>
            <person name="Tognoni A."/>
            <person name="Tosato V."/>
            <person name="Uchiyama S."/>
            <person name="Vandenbol M."/>
            <person name="Vannier F."/>
            <person name="Vassarotti A."/>
            <person name="Viari A."/>
            <person name="Wambutt R."/>
            <person name="Wedler E."/>
            <person name="Wedler H."/>
            <person name="Weitzenegger T."/>
            <person name="Winters P."/>
            <person name="Wipat A."/>
            <person name="Yamamoto H."/>
            <person name="Yamane K."/>
            <person name="Yasumoto K."/>
            <person name="Yata K."/>
            <person name="Yoshida K."/>
            <person name="Yoshikawa H.-F."/>
            <person name="Zumstein E."/>
            <person name="Yoshikawa H."/>
            <person name="Danchin A."/>
        </authorList>
    </citation>
    <scope>NUCLEOTIDE SEQUENCE [LARGE SCALE GENOMIC DNA]</scope>
    <source>
        <strain>168</strain>
    </source>
</reference>
<comment type="subcellular location">
    <subcellularLocation>
        <location evidence="2">Cell membrane</location>
        <topology evidence="2">Multi-pass membrane protein</topology>
    </subcellularLocation>
</comment>
<dbReference type="EMBL" id="U35252">
    <property type="protein sequence ID" value="AAA76725.1"/>
    <property type="molecule type" value="Genomic_DNA"/>
</dbReference>
<dbReference type="EMBL" id="D84432">
    <property type="protein sequence ID" value="BAA12565.1"/>
    <property type="molecule type" value="Genomic_DNA"/>
</dbReference>
<dbReference type="EMBL" id="AL009126">
    <property type="protein sequence ID" value="CAB14369.1"/>
    <property type="molecule type" value="Genomic_DNA"/>
</dbReference>
<dbReference type="PIR" id="A69712">
    <property type="entry name" value="A69712"/>
</dbReference>
<dbReference type="RefSeq" id="NP_390318.1">
    <property type="nucleotide sequence ID" value="NC_000964.3"/>
</dbReference>
<dbReference type="RefSeq" id="WP_003230233.1">
    <property type="nucleotide sequence ID" value="NZ_OZ025638.1"/>
</dbReference>
<dbReference type="PDB" id="6DCS">
    <property type="method" value="X-ray"/>
    <property type="resolution" value="2.70 A"/>
    <property type="chains" value="A/B=85-206"/>
</dbReference>
<dbReference type="PDBsum" id="6DCS"/>
<dbReference type="SMR" id="P49783"/>
<dbReference type="FunCoup" id="P49783">
    <property type="interactions" value="93"/>
</dbReference>
<dbReference type="STRING" id="224308.BSU24380"/>
<dbReference type="TCDB" id="9.B.70.1.1">
    <property type="family name" value="the multicomponent putative spoiiiae exporter (spoiiia-e) family"/>
</dbReference>
<dbReference type="PaxDb" id="224308-BSU24380"/>
<dbReference type="EnsemblBacteria" id="CAB14369">
    <property type="protein sequence ID" value="CAB14369"/>
    <property type="gene ID" value="BSU_24380"/>
</dbReference>
<dbReference type="GeneID" id="938576"/>
<dbReference type="KEGG" id="bsu:BSU24380"/>
<dbReference type="PATRIC" id="fig|224308.179.peg.2656"/>
<dbReference type="eggNOG" id="ENOG503322G">
    <property type="taxonomic scope" value="Bacteria"/>
</dbReference>
<dbReference type="InParanoid" id="P49783"/>
<dbReference type="OrthoDB" id="2375554at2"/>
<dbReference type="BioCyc" id="BSUB:BSU24380-MONOMER"/>
<dbReference type="Proteomes" id="UP000001570">
    <property type="component" value="Chromosome"/>
</dbReference>
<dbReference type="GO" id="GO:0005886">
    <property type="term" value="C:plasma membrane"/>
    <property type="evidence" value="ECO:0007669"/>
    <property type="project" value="UniProtKB-SubCell"/>
</dbReference>
<dbReference type="GO" id="GO:0030435">
    <property type="term" value="P:sporulation resulting in formation of a cellular spore"/>
    <property type="evidence" value="ECO:0007669"/>
    <property type="project" value="UniProtKB-KW"/>
</dbReference>
<dbReference type="InterPro" id="IPR014245">
    <property type="entry name" value="Spore_III_AF"/>
</dbReference>
<dbReference type="NCBIfam" id="TIGR02896">
    <property type="entry name" value="spore_III_AF"/>
    <property type="match status" value="1"/>
</dbReference>
<dbReference type="Pfam" id="PF09581">
    <property type="entry name" value="Spore_III_AF"/>
    <property type="match status" value="1"/>
</dbReference>
<protein>
    <recommendedName>
        <fullName>Stage III sporulation protein AF</fullName>
    </recommendedName>
</protein>
<keyword id="KW-0002">3D-structure</keyword>
<keyword id="KW-1003">Cell membrane</keyword>
<keyword id="KW-0472">Membrane</keyword>
<keyword id="KW-1185">Reference proteome</keyword>
<keyword id="KW-0749">Sporulation</keyword>
<keyword id="KW-0812">Transmembrane</keyword>
<keyword id="KW-1133">Transmembrane helix</keyword>